<proteinExistence type="inferred from homology"/>
<name>RS18_PARL1</name>
<dbReference type="EMBL" id="CP000774">
    <property type="protein sequence ID" value="ABS64966.1"/>
    <property type="molecule type" value="Genomic_DNA"/>
</dbReference>
<dbReference type="SMR" id="A7HYI3"/>
<dbReference type="STRING" id="402881.Plav_3362"/>
<dbReference type="KEGG" id="pla:Plav_3362"/>
<dbReference type="eggNOG" id="COG0238">
    <property type="taxonomic scope" value="Bacteria"/>
</dbReference>
<dbReference type="HOGENOM" id="CLU_148710_2_3_5"/>
<dbReference type="OrthoDB" id="9812008at2"/>
<dbReference type="Proteomes" id="UP000006377">
    <property type="component" value="Chromosome"/>
</dbReference>
<dbReference type="GO" id="GO:0022627">
    <property type="term" value="C:cytosolic small ribosomal subunit"/>
    <property type="evidence" value="ECO:0007669"/>
    <property type="project" value="TreeGrafter"/>
</dbReference>
<dbReference type="GO" id="GO:0070181">
    <property type="term" value="F:small ribosomal subunit rRNA binding"/>
    <property type="evidence" value="ECO:0007669"/>
    <property type="project" value="TreeGrafter"/>
</dbReference>
<dbReference type="GO" id="GO:0003735">
    <property type="term" value="F:structural constituent of ribosome"/>
    <property type="evidence" value="ECO:0007669"/>
    <property type="project" value="InterPro"/>
</dbReference>
<dbReference type="GO" id="GO:0006412">
    <property type="term" value="P:translation"/>
    <property type="evidence" value="ECO:0007669"/>
    <property type="project" value="UniProtKB-UniRule"/>
</dbReference>
<dbReference type="Gene3D" id="4.10.640.10">
    <property type="entry name" value="Ribosomal protein S18"/>
    <property type="match status" value="1"/>
</dbReference>
<dbReference type="HAMAP" id="MF_00270">
    <property type="entry name" value="Ribosomal_bS18"/>
    <property type="match status" value="1"/>
</dbReference>
<dbReference type="InterPro" id="IPR001648">
    <property type="entry name" value="Ribosomal_bS18"/>
</dbReference>
<dbReference type="InterPro" id="IPR018275">
    <property type="entry name" value="Ribosomal_bS18_CS"/>
</dbReference>
<dbReference type="InterPro" id="IPR036870">
    <property type="entry name" value="Ribosomal_bS18_sf"/>
</dbReference>
<dbReference type="NCBIfam" id="TIGR00165">
    <property type="entry name" value="S18"/>
    <property type="match status" value="1"/>
</dbReference>
<dbReference type="PANTHER" id="PTHR13479">
    <property type="entry name" value="30S RIBOSOMAL PROTEIN S18"/>
    <property type="match status" value="1"/>
</dbReference>
<dbReference type="PANTHER" id="PTHR13479:SF40">
    <property type="entry name" value="SMALL RIBOSOMAL SUBUNIT PROTEIN BS18M"/>
    <property type="match status" value="1"/>
</dbReference>
<dbReference type="Pfam" id="PF01084">
    <property type="entry name" value="Ribosomal_S18"/>
    <property type="match status" value="1"/>
</dbReference>
<dbReference type="PRINTS" id="PR00974">
    <property type="entry name" value="RIBOSOMALS18"/>
</dbReference>
<dbReference type="SUPFAM" id="SSF46911">
    <property type="entry name" value="Ribosomal protein S18"/>
    <property type="match status" value="1"/>
</dbReference>
<dbReference type="PROSITE" id="PS00057">
    <property type="entry name" value="RIBOSOMAL_S18"/>
    <property type="match status" value="1"/>
</dbReference>
<comment type="function">
    <text evidence="1">Binds as a heterodimer with protein bS6 to the central domain of the 16S rRNA, where it helps stabilize the platform of the 30S subunit.</text>
</comment>
<comment type="subunit">
    <text evidence="1">Part of the 30S ribosomal subunit. Forms a tight heterodimer with protein bS6.</text>
</comment>
<comment type="similarity">
    <text evidence="1">Belongs to the bacterial ribosomal protein bS18 family.</text>
</comment>
<protein>
    <recommendedName>
        <fullName evidence="1">Small ribosomal subunit protein bS18</fullName>
    </recommendedName>
    <alternativeName>
        <fullName evidence="2">30S ribosomal protein S18</fullName>
    </alternativeName>
</protein>
<feature type="chain" id="PRO_0000345522" description="Small ribosomal subunit protein bS18">
    <location>
        <begin position="1"/>
        <end position="81"/>
    </location>
</feature>
<keyword id="KW-1185">Reference proteome</keyword>
<keyword id="KW-0687">Ribonucleoprotein</keyword>
<keyword id="KW-0689">Ribosomal protein</keyword>
<keyword id="KW-0694">RNA-binding</keyword>
<keyword id="KW-0699">rRNA-binding</keyword>
<reference key="1">
    <citation type="journal article" date="2011" name="Stand. Genomic Sci.">
        <title>Complete genome sequence of Parvibaculum lavamentivorans type strain (DS-1(T)).</title>
        <authorList>
            <person name="Schleheck D."/>
            <person name="Weiss M."/>
            <person name="Pitluck S."/>
            <person name="Bruce D."/>
            <person name="Land M.L."/>
            <person name="Han S."/>
            <person name="Saunders E."/>
            <person name="Tapia R."/>
            <person name="Detter C."/>
            <person name="Brettin T."/>
            <person name="Han J."/>
            <person name="Woyke T."/>
            <person name="Goodwin L."/>
            <person name="Pennacchio L."/>
            <person name="Nolan M."/>
            <person name="Cook A.M."/>
            <person name="Kjelleberg S."/>
            <person name="Thomas T."/>
        </authorList>
    </citation>
    <scope>NUCLEOTIDE SEQUENCE [LARGE SCALE GENOMIC DNA]</scope>
    <source>
        <strain>DS-1 / DSM 13023 / NCIMB 13966</strain>
    </source>
</reference>
<sequence>MSTSAQPARRPFFRRRKTCPFSGANAPKIDYKDVKLLQRYISERGKIVPSRITAVSAKKQRELARAIKRARFLALIPYVIS</sequence>
<evidence type="ECO:0000255" key="1">
    <source>
        <dbReference type="HAMAP-Rule" id="MF_00270"/>
    </source>
</evidence>
<evidence type="ECO:0000305" key="2"/>
<accession>A7HYI3</accession>
<organism>
    <name type="scientific">Parvibaculum lavamentivorans (strain DS-1 / DSM 13023 / NCIMB 13966)</name>
    <dbReference type="NCBI Taxonomy" id="402881"/>
    <lineage>
        <taxon>Bacteria</taxon>
        <taxon>Pseudomonadati</taxon>
        <taxon>Pseudomonadota</taxon>
        <taxon>Alphaproteobacteria</taxon>
        <taxon>Hyphomicrobiales</taxon>
        <taxon>Parvibaculaceae</taxon>
        <taxon>Parvibaculum</taxon>
    </lineage>
</organism>
<gene>
    <name evidence="1" type="primary">rpsR</name>
    <name type="ordered locus">Plav_3362</name>
</gene>